<sequence>MFLSEAGARPRAGEASASERRKWVKVFKACDEDNKGYLSREDFKVAIVMLFGYKPSKIEADAVMSSVNPNTSGVSLEGFLSAVKRKKEARLYRNEIRQIFTAFDVHYRGFLTLEDFKRAFSRVAPKLPARTVLEVFREADQDSDGHVSFRDFEYAMNHGQSK</sequence>
<gene>
    <name type="primary">Efcab11</name>
</gene>
<organism>
    <name type="scientific">Mus musculus</name>
    <name type="common">Mouse</name>
    <dbReference type="NCBI Taxonomy" id="10090"/>
    <lineage>
        <taxon>Eukaryota</taxon>
        <taxon>Metazoa</taxon>
        <taxon>Chordata</taxon>
        <taxon>Craniata</taxon>
        <taxon>Vertebrata</taxon>
        <taxon>Euteleostomi</taxon>
        <taxon>Mammalia</taxon>
        <taxon>Eutheria</taxon>
        <taxon>Euarchontoglires</taxon>
        <taxon>Glires</taxon>
        <taxon>Rodentia</taxon>
        <taxon>Myomorpha</taxon>
        <taxon>Muroidea</taxon>
        <taxon>Muridae</taxon>
        <taxon>Murinae</taxon>
        <taxon>Mus</taxon>
        <taxon>Mus</taxon>
    </lineage>
</organism>
<name>EFC11_MOUSE</name>
<dbReference type="EMBL" id="AK011507">
    <property type="protein sequence ID" value="BAB27665.1"/>
    <property type="molecule type" value="mRNA"/>
</dbReference>
<dbReference type="EMBL" id="AK011836">
    <property type="protein sequence ID" value="BAB27869.1"/>
    <property type="molecule type" value="mRNA"/>
</dbReference>
<dbReference type="EMBL" id="AK035051">
    <property type="protein sequence ID" value="BAC28925.1"/>
    <property type="molecule type" value="mRNA"/>
</dbReference>
<dbReference type="EMBL" id="BC049109">
    <property type="protein sequence ID" value="AAH49109.1"/>
    <property type="molecule type" value="mRNA"/>
</dbReference>
<dbReference type="CCDS" id="CCDS26104.1">
    <molecule id="Q9D0E5-1"/>
</dbReference>
<dbReference type="RefSeq" id="NP_084448.1">
    <molecule id="Q9D0E5-1"/>
    <property type="nucleotide sequence ID" value="NM_030172.3"/>
</dbReference>
<dbReference type="RefSeq" id="XP_006516446.1">
    <property type="nucleotide sequence ID" value="XM_006516383.3"/>
</dbReference>
<dbReference type="RefSeq" id="XP_011242518.1">
    <property type="nucleotide sequence ID" value="XM_011244216.2"/>
</dbReference>
<dbReference type="SMR" id="Q9D0E5"/>
<dbReference type="FunCoup" id="Q9D0E5">
    <property type="interactions" value="499"/>
</dbReference>
<dbReference type="STRING" id="10090.ENSMUSP00000044808"/>
<dbReference type="iPTMnet" id="Q9D0E5"/>
<dbReference type="PhosphoSitePlus" id="Q9D0E5"/>
<dbReference type="PaxDb" id="10090-ENSMUSP00000044808"/>
<dbReference type="ProteomicsDB" id="277691">
    <molecule id="Q9D0E5-1"/>
</dbReference>
<dbReference type="Antibodypedia" id="65215">
    <property type="antibodies" value="17 antibodies from 10 providers"/>
</dbReference>
<dbReference type="Ensembl" id="ENSMUST00000046485.5">
    <molecule id="Q9D0E5-1"/>
    <property type="protein sequence ID" value="ENSMUSP00000044808.4"/>
    <property type="gene ID" value="ENSMUSG00000021176.7"/>
</dbReference>
<dbReference type="Ensembl" id="ENSMUST00000223114.2">
    <molecule id="Q9D0E5-1"/>
    <property type="protein sequence ID" value="ENSMUSP00000152734.2"/>
    <property type="gene ID" value="ENSMUSG00000021176.7"/>
</dbReference>
<dbReference type="GeneID" id="78767"/>
<dbReference type="KEGG" id="mmu:78767"/>
<dbReference type="UCSC" id="uc007osb.1">
    <molecule id="Q9D0E5-2"/>
    <property type="organism name" value="mouse"/>
</dbReference>
<dbReference type="UCSC" id="uc007osc.1">
    <molecule id="Q9D0E5-1"/>
    <property type="organism name" value="mouse"/>
</dbReference>
<dbReference type="AGR" id="MGI:1926017"/>
<dbReference type="CTD" id="90141"/>
<dbReference type="MGI" id="MGI:1926017">
    <property type="gene designation" value="Efcab11"/>
</dbReference>
<dbReference type="VEuPathDB" id="HostDB:ENSMUSG00000021176"/>
<dbReference type="eggNOG" id="KOG0027">
    <property type="taxonomic scope" value="Eukaryota"/>
</dbReference>
<dbReference type="GeneTree" id="ENSGT00390000004917"/>
<dbReference type="HOGENOM" id="CLU_114999_0_0_1"/>
<dbReference type="InParanoid" id="Q9D0E5"/>
<dbReference type="OMA" id="YAMKHGQ"/>
<dbReference type="OrthoDB" id="55265at9989"/>
<dbReference type="PhylomeDB" id="Q9D0E5"/>
<dbReference type="TreeFam" id="TF329255"/>
<dbReference type="BioGRID-ORCS" id="78767">
    <property type="hits" value="0 hits in 76 CRISPR screens"/>
</dbReference>
<dbReference type="ChiTaRS" id="Egfem1">
    <property type="organism name" value="mouse"/>
</dbReference>
<dbReference type="PRO" id="PR:Q9D0E5"/>
<dbReference type="Proteomes" id="UP000000589">
    <property type="component" value="Chromosome 12"/>
</dbReference>
<dbReference type="RNAct" id="Q9D0E5">
    <property type="molecule type" value="protein"/>
</dbReference>
<dbReference type="Bgee" id="ENSMUSG00000021176">
    <property type="expression patterns" value="Expressed in spermatocyte and 109 other cell types or tissues"/>
</dbReference>
<dbReference type="ExpressionAtlas" id="Q9D0E5">
    <property type="expression patterns" value="baseline and differential"/>
</dbReference>
<dbReference type="GO" id="GO:0005509">
    <property type="term" value="F:calcium ion binding"/>
    <property type="evidence" value="ECO:0007669"/>
    <property type="project" value="InterPro"/>
</dbReference>
<dbReference type="CDD" id="cd00051">
    <property type="entry name" value="EFh"/>
    <property type="match status" value="1"/>
</dbReference>
<dbReference type="FunFam" id="1.10.238.10:FF:000003">
    <property type="entry name" value="Calmodulin A"/>
    <property type="match status" value="1"/>
</dbReference>
<dbReference type="Gene3D" id="1.10.238.10">
    <property type="entry name" value="EF-hand"/>
    <property type="match status" value="1"/>
</dbReference>
<dbReference type="InterPro" id="IPR050145">
    <property type="entry name" value="Centrin_CML-like"/>
</dbReference>
<dbReference type="InterPro" id="IPR011992">
    <property type="entry name" value="EF-hand-dom_pair"/>
</dbReference>
<dbReference type="InterPro" id="IPR018247">
    <property type="entry name" value="EF_Hand_1_Ca_BS"/>
</dbReference>
<dbReference type="InterPro" id="IPR002048">
    <property type="entry name" value="EF_hand_dom"/>
</dbReference>
<dbReference type="PANTHER" id="PTHR23050">
    <property type="entry name" value="CALCIUM BINDING PROTEIN"/>
    <property type="match status" value="1"/>
</dbReference>
<dbReference type="Pfam" id="PF13499">
    <property type="entry name" value="EF-hand_7"/>
    <property type="match status" value="1"/>
</dbReference>
<dbReference type="Pfam" id="PF13833">
    <property type="entry name" value="EF-hand_8"/>
    <property type="match status" value="1"/>
</dbReference>
<dbReference type="SMART" id="SM00054">
    <property type="entry name" value="EFh"/>
    <property type="match status" value="3"/>
</dbReference>
<dbReference type="SUPFAM" id="SSF47473">
    <property type="entry name" value="EF-hand"/>
    <property type="match status" value="1"/>
</dbReference>
<dbReference type="PROSITE" id="PS00018">
    <property type="entry name" value="EF_HAND_1"/>
    <property type="match status" value="1"/>
</dbReference>
<dbReference type="PROSITE" id="PS50222">
    <property type="entry name" value="EF_HAND_2"/>
    <property type="match status" value="3"/>
</dbReference>
<accession>Q9D0E5</accession>
<accession>Q9D041</accession>
<evidence type="ECO:0000255" key="1">
    <source>
        <dbReference type="PROSITE-ProRule" id="PRU00448"/>
    </source>
</evidence>
<evidence type="ECO:0000303" key="2">
    <source>
    </source>
</evidence>
<feature type="chain" id="PRO_0000286581" description="EF-hand calcium-binding domain-containing protein 11">
    <location>
        <begin position="1"/>
        <end position="162"/>
    </location>
</feature>
<feature type="domain" description="EF-hand 1" evidence="1">
    <location>
        <begin position="18"/>
        <end position="53"/>
    </location>
</feature>
<feature type="domain" description="EF-hand 2" evidence="1">
    <location>
        <begin position="91"/>
        <end position="126"/>
    </location>
</feature>
<feature type="domain" description="EF-hand 3" evidence="1">
    <location>
        <begin position="127"/>
        <end position="162"/>
    </location>
</feature>
<feature type="binding site" evidence="1">
    <location>
        <position position="140"/>
    </location>
    <ligand>
        <name>Ca(2+)</name>
        <dbReference type="ChEBI" id="CHEBI:29108"/>
    </ligand>
</feature>
<feature type="binding site" evidence="1">
    <location>
        <position position="142"/>
    </location>
    <ligand>
        <name>Ca(2+)</name>
        <dbReference type="ChEBI" id="CHEBI:29108"/>
    </ligand>
</feature>
<feature type="binding site" evidence="1">
    <location>
        <position position="144"/>
    </location>
    <ligand>
        <name>Ca(2+)</name>
        <dbReference type="ChEBI" id="CHEBI:29108"/>
    </ligand>
</feature>
<feature type="binding site" evidence="1">
    <location>
        <position position="146"/>
    </location>
    <ligand>
        <name>Ca(2+)</name>
        <dbReference type="ChEBI" id="CHEBI:29108"/>
    </ligand>
</feature>
<feature type="binding site" evidence="1">
    <location>
        <position position="151"/>
    </location>
    <ligand>
        <name>Ca(2+)</name>
        <dbReference type="ChEBI" id="CHEBI:29108"/>
    </ligand>
</feature>
<feature type="splice variant" id="VSP_025103" description="In isoform 2." evidence="2">
    <original>READQDSDGHVSFRDFEYAMNHGQSK</original>
    <variation>SSCF</variation>
    <location>
        <begin position="137"/>
        <end position="162"/>
    </location>
</feature>
<comment type="alternative products">
    <event type="alternative splicing"/>
    <isoform>
        <id>Q9D0E5-1</id>
        <name>1</name>
        <sequence type="displayed"/>
    </isoform>
    <isoform>
        <id>Q9D0E5-2</id>
        <name>2</name>
        <sequence type="described" ref="VSP_025103"/>
    </isoform>
</comment>
<protein>
    <recommendedName>
        <fullName>EF-hand calcium-binding domain-containing protein 11</fullName>
    </recommendedName>
</protein>
<proteinExistence type="evidence at transcript level"/>
<reference key="1">
    <citation type="journal article" date="2005" name="Science">
        <title>The transcriptional landscape of the mammalian genome.</title>
        <authorList>
            <person name="Carninci P."/>
            <person name="Kasukawa T."/>
            <person name="Katayama S."/>
            <person name="Gough J."/>
            <person name="Frith M.C."/>
            <person name="Maeda N."/>
            <person name="Oyama R."/>
            <person name="Ravasi T."/>
            <person name="Lenhard B."/>
            <person name="Wells C."/>
            <person name="Kodzius R."/>
            <person name="Shimokawa K."/>
            <person name="Bajic V.B."/>
            <person name="Brenner S.E."/>
            <person name="Batalov S."/>
            <person name="Forrest A.R."/>
            <person name="Zavolan M."/>
            <person name="Davis M.J."/>
            <person name="Wilming L.G."/>
            <person name="Aidinis V."/>
            <person name="Allen J.E."/>
            <person name="Ambesi-Impiombato A."/>
            <person name="Apweiler R."/>
            <person name="Aturaliya R.N."/>
            <person name="Bailey T.L."/>
            <person name="Bansal M."/>
            <person name="Baxter L."/>
            <person name="Beisel K.W."/>
            <person name="Bersano T."/>
            <person name="Bono H."/>
            <person name="Chalk A.M."/>
            <person name="Chiu K.P."/>
            <person name="Choudhary V."/>
            <person name="Christoffels A."/>
            <person name="Clutterbuck D.R."/>
            <person name="Crowe M.L."/>
            <person name="Dalla E."/>
            <person name="Dalrymple B.P."/>
            <person name="de Bono B."/>
            <person name="Della Gatta G."/>
            <person name="di Bernardo D."/>
            <person name="Down T."/>
            <person name="Engstrom P."/>
            <person name="Fagiolini M."/>
            <person name="Faulkner G."/>
            <person name="Fletcher C.F."/>
            <person name="Fukushima T."/>
            <person name="Furuno M."/>
            <person name="Futaki S."/>
            <person name="Gariboldi M."/>
            <person name="Georgii-Hemming P."/>
            <person name="Gingeras T.R."/>
            <person name="Gojobori T."/>
            <person name="Green R.E."/>
            <person name="Gustincich S."/>
            <person name="Harbers M."/>
            <person name="Hayashi Y."/>
            <person name="Hensch T.K."/>
            <person name="Hirokawa N."/>
            <person name="Hill D."/>
            <person name="Huminiecki L."/>
            <person name="Iacono M."/>
            <person name="Ikeo K."/>
            <person name="Iwama A."/>
            <person name="Ishikawa T."/>
            <person name="Jakt M."/>
            <person name="Kanapin A."/>
            <person name="Katoh M."/>
            <person name="Kawasawa Y."/>
            <person name="Kelso J."/>
            <person name="Kitamura H."/>
            <person name="Kitano H."/>
            <person name="Kollias G."/>
            <person name="Krishnan S.P."/>
            <person name="Kruger A."/>
            <person name="Kummerfeld S.K."/>
            <person name="Kurochkin I.V."/>
            <person name="Lareau L.F."/>
            <person name="Lazarevic D."/>
            <person name="Lipovich L."/>
            <person name="Liu J."/>
            <person name="Liuni S."/>
            <person name="McWilliam S."/>
            <person name="Madan Babu M."/>
            <person name="Madera M."/>
            <person name="Marchionni L."/>
            <person name="Matsuda H."/>
            <person name="Matsuzawa S."/>
            <person name="Miki H."/>
            <person name="Mignone F."/>
            <person name="Miyake S."/>
            <person name="Morris K."/>
            <person name="Mottagui-Tabar S."/>
            <person name="Mulder N."/>
            <person name="Nakano N."/>
            <person name="Nakauchi H."/>
            <person name="Ng P."/>
            <person name="Nilsson R."/>
            <person name="Nishiguchi S."/>
            <person name="Nishikawa S."/>
            <person name="Nori F."/>
            <person name="Ohara O."/>
            <person name="Okazaki Y."/>
            <person name="Orlando V."/>
            <person name="Pang K.C."/>
            <person name="Pavan W.J."/>
            <person name="Pavesi G."/>
            <person name="Pesole G."/>
            <person name="Petrovsky N."/>
            <person name="Piazza S."/>
            <person name="Reed J."/>
            <person name="Reid J.F."/>
            <person name="Ring B.Z."/>
            <person name="Ringwald M."/>
            <person name="Rost B."/>
            <person name="Ruan Y."/>
            <person name="Salzberg S.L."/>
            <person name="Sandelin A."/>
            <person name="Schneider C."/>
            <person name="Schoenbach C."/>
            <person name="Sekiguchi K."/>
            <person name="Semple C.A."/>
            <person name="Seno S."/>
            <person name="Sessa L."/>
            <person name="Sheng Y."/>
            <person name="Shibata Y."/>
            <person name="Shimada H."/>
            <person name="Shimada K."/>
            <person name="Silva D."/>
            <person name="Sinclair B."/>
            <person name="Sperling S."/>
            <person name="Stupka E."/>
            <person name="Sugiura K."/>
            <person name="Sultana R."/>
            <person name="Takenaka Y."/>
            <person name="Taki K."/>
            <person name="Tammoja K."/>
            <person name="Tan S.L."/>
            <person name="Tang S."/>
            <person name="Taylor M.S."/>
            <person name="Tegner J."/>
            <person name="Teichmann S.A."/>
            <person name="Ueda H.R."/>
            <person name="van Nimwegen E."/>
            <person name="Verardo R."/>
            <person name="Wei C.L."/>
            <person name="Yagi K."/>
            <person name="Yamanishi H."/>
            <person name="Zabarovsky E."/>
            <person name="Zhu S."/>
            <person name="Zimmer A."/>
            <person name="Hide W."/>
            <person name="Bult C."/>
            <person name="Grimmond S.M."/>
            <person name="Teasdale R.D."/>
            <person name="Liu E.T."/>
            <person name="Brusic V."/>
            <person name="Quackenbush J."/>
            <person name="Wahlestedt C."/>
            <person name="Mattick J.S."/>
            <person name="Hume D.A."/>
            <person name="Kai C."/>
            <person name="Sasaki D."/>
            <person name="Tomaru Y."/>
            <person name="Fukuda S."/>
            <person name="Kanamori-Katayama M."/>
            <person name="Suzuki M."/>
            <person name="Aoki J."/>
            <person name="Arakawa T."/>
            <person name="Iida J."/>
            <person name="Imamura K."/>
            <person name="Itoh M."/>
            <person name="Kato T."/>
            <person name="Kawaji H."/>
            <person name="Kawagashira N."/>
            <person name="Kawashima T."/>
            <person name="Kojima M."/>
            <person name="Kondo S."/>
            <person name="Konno H."/>
            <person name="Nakano K."/>
            <person name="Ninomiya N."/>
            <person name="Nishio T."/>
            <person name="Okada M."/>
            <person name="Plessy C."/>
            <person name="Shibata K."/>
            <person name="Shiraki T."/>
            <person name="Suzuki S."/>
            <person name="Tagami M."/>
            <person name="Waki K."/>
            <person name="Watahiki A."/>
            <person name="Okamura-Oho Y."/>
            <person name="Suzuki H."/>
            <person name="Kawai J."/>
            <person name="Hayashizaki Y."/>
        </authorList>
    </citation>
    <scope>NUCLEOTIDE SEQUENCE [LARGE SCALE MRNA] (ISOFORMS 1 AND 2)</scope>
    <source>
        <strain>C57BL/6J</strain>
        <tissue>Embryo</tissue>
    </source>
</reference>
<reference key="2">
    <citation type="journal article" date="2004" name="Genome Res.">
        <title>The status, quality, and expansion of the NIH full-length cDNA project: the Mammalian Gene Collection (MGC).</title>
        <authorList>
            <consortium name="The MGC Project Team"/>
        </authorList>
    </citation>
    <scope>NUCLEOTIDE SEQUENCE [LARGE SCALE MRNA] (ISOFORM 1)</scope>
    <source>
        <strain>C57BL/6J</strain>
        <tissue>Brain</tissue>
    </source>
</reference>
<keyword id="KW-0025">Alternative splicing</keyword>
<keyword id="KW-0106">Calcium</keyword>
<keyword id="KW-0479">Metal-binding</keyword>
<keyword id="KW-1185">Reference proteome</keyword>
<keyword id="KW-0677">Repeat</keyword>